<sequence>MILPDVQATKSEVAINLSRVGVTNVKKLVKVARPDKRPIILISTFNMYVDLPSERRGANLSRNFEVIDEVLEDMVKSPVYEIEDLCGEVARRLLNRHEYATRSEVHMDSELIVKRKTPQTEMQSQKVVKVFAKAIAERGEAIKVRRVIGSEVIGITACPCAQEIMRVSAENELQNLGVPQEKIDAFLNKIPMATHNQRGRGIVSIETAGEYEVPLNTLINIIEQSMSTMSFELLKRGDEYEVVRNAHANPKFVEDCVRDMARRVVTEFKDLPDDAVVKIKQINEESIHQHNAFAELSTTMGKLRTEIGQ</sequence>
<accession>Q0W8U7</accession>
<keyword id="KW-0378">Hydrolase</keyword>
<keyword id="KW-0408">Iron</keyword>
<keyword id="KW-0479">Metal-binding</keyword>
<keyword id="KW-1185">Reference proteome</keyword>
<feature type="chain" id="PRO_0000289544" description="GTP cyclohydrolase MptA 2">
    <location>
        <begin position="1"/>
        <end position="309"/>
    </location>
</feature>
<feature type="site" description="May be catalytically important" evidence="1">
    <location>
        <position position="158"/>
    </location>
</feature>
<name>MPTA2_METAR</name>
<evidence type="ECO:0000255" key="1">
    <source>
        <dbReference type="HAMAP-Rule" id="MF_01527"/>
    </source>
</evidence>
<evidence type="ECO:0000305" key="2"/>
<gene>
    <name evidence="1" type="primary">mptA2</name>
    <name type="ordered locus">UNCMA_29770</name>
    <name type="ORF">LRC194</name>
</gene>
<comment type="function">
    <text evidence="1">Converts GTP to 7,8-dihydro-D-neopterin 2',3'-cyclic phosphate, the first intermediate in the biosynthesis of coenzyme methanopterin.</text>
</comment>
<comment type="catalytic activity">
    <reaction evidence="1">
        <text>GTP + H2O = 7,8-dihydroneopterin 2',3'-cyclic phosphate + formate + diphosphate + H(+)</text>
        <dbReference type="Rhea" id="RHEA:25860"/>
        <dbReference type="ChEBI" id="CHEBI:15377"/>
        <dbReference type="ChEBI" id="CHEBI:15378"/>
        <dbReference type="ChEBI" id="CHEBI:15740"/>
        <dbReference type="ChEBI" id="CHEBI:33019"/>
        <dbReference type="ChEBI" id="CHEBI:37565"/>
        <dbReference type="ChEBI" id="CHEBI:58854"/>
        <dbReference type="EC" id="3.5.4.39"/>
    </reaction>
</comment>
<comment type="cofactor">
    <cofactor evidence="1">
        <name>Fe(2+)</name>
        <dbReference type="ChEBI" id="CHEBI:29033"/>
    </cofactor>
    <text evidence="1">Binds 1 Fe(2+) ion per subunit.</text>
</comment>
<comment type="pathway">
    <text evidence="1">Cofactor biosynthesis; 5,6,7,8-tetrahydromethanopterin biosynthesis.</text>
</comment>
<comment type="subunit">
    <text evidence="1">Homodimer.</text>
</comment>
<comment type="similarity">
    <text evidence="1">Belongs to the GTP cyclohydrolase IV family.</text>
</comment>
<comment type="sequence caution" evidence="2">
    <conflict type="erroneous initiation">
        <sequence resource="EMBL-CDS" id="CAJ35196"/>
    </conflict>
</comment>
<reference key="1">
    <citation type="journal article" date="2006" name="Science">
        <title>Genome of rice cluster I archaea -- the key methane producers in the rice rhizosphere.</title>
        <authorList>
            <person name="Erkel C."/>
            <person name="Kube M."/>
            <person name="Reinhardt R."/>
            <person name="Liesack W."/>
        </authorList>
    </citation>
    <scope>NUCLEOTIDE SEQUENCE [LARGE SCALE GENOMIC DNA]</scope>
    <source>
        <strain>DSM 22066 / NBRC 105507 / MRE50</strain>
    </source>
</reference>
<organism>
    <name type="scientific">Methanocella arvoryzae (strain DSM 22066 / NBRC 105507 / MRE50)</name>
    <dbReference type="NCBI Taxonomy" id="351160"/>
    <lineage>
        <taxon>Archaea</taxon>
        <taxon>Methanobacteriati</taxon>
        <taxon>Methanobacteriota</taxon>
        <taxon>Stenosarchaea group</taxon>
        <taxon>Methanomicrobia</taxon>
        <taxon>Methanocellales</taxon>
        <taxon>Methanocellaceae</taxon>
        <taxon>Methanocella</taxon>
    </lineage>
</organism>
<proteinExistence type="inferred from homology"/>
<dbReference type="EC" id="3.5.4.39" evidence="1"/>
<dbReference type="EMBL" id="AM114193">
    <property type="protein sequence ID" value="CAJ35196.1"/>
    <property type="status" value="ALT_INIT"/>
    <property type="molecule type" value="Genomic_DNA"/>
</dbReference>
<dbReference type="SMR" id="Q0W8U7"/>
<dbReference type="STRING" id="351160.LRC194"/>
<dbReference type="GeneID" id="5143604"/>
<dbReference type="KEGG" id="rci:LRC194"/>
<dbReference type="PATRIC" id="fig|351160.9.peg.3062"/>
<dbReference type="eggNOG" id="arCOG04301">
    <property type="taxonomic scope" value="Archaea"/>
</dbReference>
<dbReference type="OrthoDB" id="53087at2157"/>
<dbReference type="UniPathway" id="UPA00065"/>
<dbReference type="Proteomes" id="UP000000663">
    <property type="component" value="Chromosome"/>
</dbReference>
<dbReference type="GO" id="GO:0003934">
    <property type="term" value="F:GTP cyclohydrolase I activity"/>
    <property type="evidence" value="ECO:0007669"/>
    <property type="project" value="InterPro"/>
</dbReference>
<dbReference type="GO" id="GO:0044682">
    <property type="term" value="F:GTP cyclohydrolase IV activity"/>
    <property type="evidence" value="ECO:0007669"/>
    <property type="project" value="UniProtKB-UniRule"/>
</dbReference>
<dbReference type="GO" id="GO:0005506">
    <property type="term" value="F:iron ion binding"/>
    <property type="evidence" value="ECO:0007669"/>
    <property type="project" value="UniProtKB-UniRule"/>
</dbReference>
<dbReference type="GO" id="GO:2001118">
    <property type="term" value="P:tetrahydromethanopterin biosynthetic process"/>
    <property type="evidence" value="ECO:0007669"/>
    <property type="project" value="UniProtKB-UniRule"/>
</dbReference>
<dbReference type="Gene3D" id="3.10.270.10">
    <property type="entry name" value="Urate Oxidase"/>
    <property type="match status" value="1"/>
</dbReference>
<dbReference type="HAMAP" id="MF_01527_A">
    <property type="entry name" value="GTP_cyclohydrol_A"/>
    <property type="match status" value="1"/>
</dbReference>
<dbReference type="InterPro" id="IPR003801">
    <property type="entry name" value="GTP_cyclohydrolase_FolE2/MptA"/>
</dbReference>
<dbReference type="InterPro" id="IPR022840">
    <property type="entry name" value="GTP_cyclohydrolase_MptA"/>
</dbReference>
<dbReference type="NCBIfam" id="TIGR00294">
    <property type="entry name" value="GTP cyclohydrolase MptA"/>
    <property type="match status" value="1"/>
</dbReference>
<dbReference type="PANTHER" id="PTHR36445">
    <property type="entry name" value="GTP CYCLOHYDROLASE MPTA"/>
    <property type="match status" value="1"/>
</dbReference>
<dbReference type="PANTHER" id="PTHR36445:SF1">
    <property type="entry name" value="GTP CYCLOHYDROLASE MPTA"/>
    <property type="match status" value="1"/>
</dbReference>
<dbReference type="Pfam" id="PF02649">
    <property type="entry name" value="GCHY-1"/>
    <property type="match status" value="1"/>
</dbReference>
<protein>
    <recommendedName>
        <fullName evidence="1">GTP cyclohydrolase MptA 2</fullName>
        <ecNumber evidence="1">3.5.4.39</ecNumber>
    </recommendedName>
    <alternativeName>
        <fullName evidence="1">GTP cyclohydrolase IV 2</fullName>
    </alternativeName>
</protein>